<protein>
    <recommendedName>
        <fullName evidence="1">Single-stranded DNA-binding protein</fullName>
        <shortName evidence="1">SSB</shortName>
    </recommendedName>
</protein>
<gene>
    <name type="primary">ssb</name>
    <name type="ordered locus">HI_0250</name>
</gene>
<name>SSB_HAEIN</name>
<comment type="function">
    <text evidence="1">Plays an important role in DNA replication, recombination and repair. Binds to ssDNA and to an array of partner proteins to recruit them to their sites of action during DNA metabolism.</text>
</comment>
<comment type="subunit">
    <text evidence="1">Homotetramer.</text>
</comment>
<proteinExistence type="inferred from homology"/>
<evidence type="ECO:0000255" key="1">
    <source>
        <dbReference type="HAMAP-Rule" id="MF_00984"/>
    </source>
</evidence>
<evidence type="ECO:0000256" key="2">
    <source>
        <dbReference type="SAM" id="MobiDB-lite"/>
    </source>
</evidence>
<feature type="chain" id="PRO_0000096048" description="Single-stranded DNA-binding protein">
    <location>
        <begin position="1"/>
        <end position="168"/>
    </location>
</feature>
<feature type="domain" description="SSB" evidence="1">
    <location>
        <begin position="4"/>
        <end position="109"/>
    </location>
</feature>
<feature type="region of interest" description="Disordered" evidence="2">
    <location>
        <begin position="109"/>
        <end position="168"/>
    </location>
</feature>
<feature type="short sequence motif" description="Important for interaction with partner proteins" evidence="1">
    <location>
        <begin position="163"/>
        <end position="168"/>
    </location>
</feature>
<feature type="compositionally biased region" description="Polar residues" evidence="2">
    <location>
        <begin position="126"/>
        <end position="145"/>
    </location>
</feature>
<feature type="compositionally biased region" description="Low complexity" evidence="2">
    <location>
        <begin position="146"/>
        <end position="158"/>
    </location>
</feature>
<feature type="sequence variant" description="In strain: TN106.">
    <original>YG</original>
    <variation>FS</variation>
    <location>
        <begin position="118"/>
        <end position="119"/>
    </location>
</feature>
<feature type="sequence variant" description="In strain: TN106.">
    <original>D</original>
    <variation>E</variation>
    <location>
        <position position="121"/>
    </location>
</feature>
<feature type="sequence variant" description="In strain: TN106.">
    <original>GA</original>
    <variation>SS</variation>
    <location>
        <begin position="124"/>
        <end position="125"/>
    </location>
</feature>
<feature type="sequence variant" description="In strain: TN106.">
    <original>S</original>
    <variation>P</variation>
    <location>
        <position position="128"/>
    </location>
</feature>
<feature type="sequence variant" description="In strain: TN106.">
    <original>A</original>
    <variation>S</variation>
    <location>
        <position position="151"/>
    </location>
</feature>
<reference key="1">
    <citation type="journal article" date="1994" name="Gene">
        <title>Cloning and sequencing of the Haemophilus influenzae ssb gene encoding single-strand DNA-binding protein.</title>
        <authorList>
            <person name="Jarosik G.P."/>
            <person name="Hansen E.J."/>
        </authorList>
    </citation>
    <scope>NUCLEOTIDE SEQUENCE [GENOMIC DNA]</scope>
    <source>
        <strain>NTHi TN106</strain>
    </source>
</reference>
<reference key="2">
    <citation type="journal article" date="1995" name="Science">
        <title>Whole-genome random sequencing and assembly of Haemophilus influenzae Rd.</title>
        <authorList>
            <person name="Fleischmann R.D."/>
            <person name="Adams M.D."/>
            <person name="White O."/>
            <person name="Clayton R.A."/>
            <person name="Kirkness E.F."/>
            <person name="Kerlavage A.R."/>
            <person name="Bult C.J."/>
            <person name="Tomb J.-F."/>
            <person name="Dougherty B.A."/>
            <person name="Merrick J.M."/>
            <person name="McKenney K."/>
            <person name="Sutton G.G."/>
            <person name="FitzHugh W."/>
            <person name="Fields C.A."/>
            <person name="Gocayne J.D."/>
            <person name="Scott J.D."/>
            <person name="Shirley R."/>
            <person name="Liu L.-I."/>
            <person name="Glodek A."/>
            <person name="Kelley J.M."/>
            <person name="Weidman J.F."/>
            <person name="Phillips C.A."/>
            <person name="Spriggs T."/>
            <person name="Hedblom E."/>
            <person name="Cotton M.D."/>
            <person name="Utterback T.R."/>
            <person name="Hanna M.C."/>
            <person name="Nguyen D.T."/>
            <person name="Saudek D.M."/>
            <person name="Brandon R.C."/>
            <person name="Fine L.D."/>
            <person name="Fritchman J.L."/>
            <person name="Fuhrmann J.L."/>
            <person name="Geoghagen N.S.M."/>
            <person name="Gnehm C.L."/>
            <person name="McDonald L.A."/>
            <person name="Small K.V."/>
            <person name="Fraser C.M."/>
            <person name="Smith H.O."/>
            <person name="Venter J.C."/>
        </authorList>
    </citation>
    <scope>NUCLEOTIDE SEQUENCE [LARGE SCALE GENOMIC DNA]</scope>
    <source>
        <strain>ATCC 51907 / DSM 11121 / KW20 / Rd</strain>
    </source>
</reference>
<accession>P44409</accession>
<organism>
    <name type="scientific">Haemophilus influenzae (strain ATCC 51907 / DSM 11121 / KW20 / Rd)</name>
    <dbReference type="NCBI Taxonomy" id="71421"/>
    <lineage>
        <taxon>Bacteria</taxon>
        <taxon>Pseudomonadati</taxon>
        <taxon>Pseudomonadota</taxon>
        <taxon>Gammaproteobacteria</taxon>
        <taxon>Pasteurellales</taxon>
        <taxon>Pasteurellaceae</taxon>
        <taxon>Haemophilus</taxon>
    </lineage>
</organism>
<sequence>MAGINKVIIVGHLGNDPEIRTMPNGDAVANISVATSESWNDRNTGERREVTEWHRIVFYRRQAEICGEYLRKGSQVYVEGRLKTRKWQDQNGQDRYTTEIQGDVMQMLGGRNQNAGGYGNDMGGAPQSSYQARQTNNGNSYQSSRPAPQQAAPQAEPPMDGFDDDIPF</sequence>
<dbReference type="EMBL" id="L42023">
    <property type="protein sequence ID" value="AAC21916.1"/>
    <property type="molecule type" value="Genomic_DNA"/>
</dbReference>
<dbReference type="EMBL" id="U04997">
    <property type="protein sequence ID" value="AAA60461.1"/>
    <property type="molecule type" value="Genomic_DNA"/>
</dbReference>
<dbReference type="PIR" id="E64057">
    <property type="entry name" value="E64057"/>
</dbReference>
<dbReference type="RefSeq" id="NP_438419.1">
    <property type="nucleotide sequence ID" value="NC_000907.1"/>
</dbReference>
<dbReference type="SMR" id="P44409"/>
<dbReference type="STRING" id="71421.HI_0250"/>
<dbReference type="EnsemblBacteria" id="AAC21916">
    <property type="protein sequence ID" value="AAC21916"/>
    <property type="gene ID" value="HI_0250"/>
</dbReference>
<dbReference type="KEGG" id="hin:HI_0250"/>
<dbReference type="PATRIC" id="fig|71421.8.peg.265"/>
<dbReference type="eggNOG" id="COG0629">
    <property type="taxonomic scope" value="Bacteria"/>
</dbReference>
<dbReference type="HOGENOM" id="CLU_078758_0_2_6"/>
<dbReference type="OrthoDB" id="9809878at2"/>
<dbReference type="PhylomeDB" id="P44409"/>
<dbReference type="BioCyc" id="HINF71421:G1GJ1-264-MONOMER"/>
<dbReference type="Proteomes" id="UP000000579">
    <property type="component" value="Chromosome"/>
</dbReference>
<dbReference type="GO" id="GO:0009295">
    <property type="term" value="C:nucleoid"/>
    <property type="evidence" value="ECO:0000318"/>
    <property type="project" value="GO_Central"/>
</dbReference>
<dbReference type="GO" id="GO:0008047">
    <property type="term" value="F:enzyme activator activity"/>
    <property type="evidence" value="ECO:0000318"/>
    <property type="project" value="GO_Central"/>
</dbReference>
<dbReference type="GO" id="GO:0003697">
    <property type="term" value="F:single-stranded DNA binding"/>
    <property type="evidence" value="ECO:0000318"/>
    <property type="project" value="GO_Central"/>
</dbReference>
<dbReference type="GO" id="GO:0006310">
    <property type="term" value="P:DNA recombination"/>
    <property type="evidence" value="ECO:0007669"/>
    <property type="project" value="UniProtKB-UniRule"/>
</dbReference>
<dbReference type="GO" id="GO:0006281">
    <property type="term" value="P:DNA repair"/>
    <property type="evidence" value="ECO:0007669"/>
    <property type="project" value="UniProtKB-UniRule"/>
</dbReference>
<dbReference type="GO" id="GO:0006260">
    <property type="term" value="P:DNA replication"/>
    <property type="evidence" value="ECO:0000318"/>
    <property type="project" value="GO_Central"/>
</dbReference>
<dbReference type="CDD" id="cd04496">
    <property type="entry name" value="SSB_OBF"/>
    <property type="match status" value="1"/>
</dbReference>
<dbReference type="Gene3D" id="2.40.50.140">
    <property type="entry name" value="Nucleic acid-binding proteins"/>
    <property type="match status" value="1"/>
</dbReference>
<dbReference type="HAMAP" id="MF_00984">
    <property type="entry name" value="SSB"/>
    <property type="match status" value="1"/>
</dbReference>
<dbReference type="InterPro" id="IPR012340">
    <property type="entry name" value="NA-bd_OB-fold"/>
</dbReference>
<dbReference type="InterPro" id="IPR000424">
    <property type="entry name" value="Primosome_PriB/ssb"/>
</dbReference>
<dbReference type="InterPro" id="IPR011344">
    <property type="entry name" value="ssDNA-bd"/>
</dbReference>
<dbReference type="NCBIfam" id="TIGR00621">
    <property type="entry name" value="ssb"/>
    <property type="match status" value="1"/>
</dbReference>
<dbReference type="PANTHER" id="PTHR10302">
    <property type="entry name" value="SINGLE-STRANDED DNA-BINDING PROTEIN"/>
    <property type="match status" value="1"/>
</dbReference>
<dbReference type="PANTHER" id="PTHR10302:SF27">
    <property type="entry name" value="SINGLE-STRANDED DNA-BINDING PROTEIN"/>
    <property type="match status" value="1"/>
</dbReference>
<dbReference type="Pfam" id="PF00436">
    <property type="entry name" value="SSB"/>
    <property type="match status" value="1"/>
</dbReference>
<dbReference type="PIRSF" id="PIRSF002070">
    <property type="entry name" value="SSB"/>
    <property type="match status" value="1"/>
</dbReference>
<dbReference type="SUPFAM" id="SSF50249">
    <property type="entry name" value="Nucleic acid-binding proteins"/>
    <property type="match status" value="1"/>
</dbReference>
<dbReference type="PROSITE" id="PS50935">
    <property type="entry name" value="SSB"/>
    <property type="match status" value="1"/>
</dbReference>
<keyword id="KW-0227">DNA damage</keyword>
<keyword id="KW-0233">DNA recombination</keyword>
<keyword id="KW-0234">DNA repair</keyword>
<keyword id="KW-0235">DNA replication</keyword>
<keyword id="KW-0238">DNA-binding</keyword>
<keyword id="KW-1185">Reference proteome</keyword>